<dbReference type="EC" id="1.3.3.3" evidence="1"/>
<dbReference type="EMBL" id="CP000644">
    <property type="protein sequence ID" value="ABO92072.1"/>
    <property type="molecule type" value="Genomic_DNA"/>
</dbReference>
<dbReference type="RefSeq" id="WP_005319901.1">
    <property type="nucleotide sequence ID" value="NC_009348.1"/>
</dbReference>
<dbReference type="SMR" id="A4ST50"/>
<dbReference type="STRING" id="29491.GCA_000820065_03419"/>
<dbReference type="KEGG" id="asa:ASA_4133"/>
<dbReference type="eggNOG" id="COG0408">
    <property type="taxonomic scope" value="Bacteria"/>
</dbReference>
<dbReference type="HOGENOM" id="CLU_026169_0_1_6"/>
<dbReference type="UniPathway" id="UPA00251">
    <property type="reaction ID" value="UER00322"/>
</dbReference>
<dbReference type="Proteomes" id="UP000000225">
    <property type="component" value="Chromosome"/>
</dbReference>
<dbReference type="GO" id="GO:0005737">
    <property type="term" value="C:cytoplasm"/>
    <property type="evidence" value="ECO:0007669"/>
    <property type="project" value="UniProtKB-SubCell"/>
</dbReference>
<dbReference type="GO" id="GO:0004109">
    <property type="term" value="F:coproporphyrinogen oxidase activity"/>
    <property type="evidence" value="ECO:0007669"/>
    <property type="project" value="UniProtKB-UniRule"/>
</dbReference>
<dbReference type="GO" id="GO:0046872">
    <property type="term" value="F:metal ion binding"/>
    <property type="evidence" value="ECO:0007669"/>
    <property type="project" value="UniProtKB-KW"/>
</dbReference>
<dbReference type="GO" id="GO:0042803">
    <property type="term" value="F:protein homodimerization activity"/>
    <property type="evidence" value="ECO:0000250"/>
    <property type="project" value="UniProtKB"/>
</dbReference>
<dbReference type="GO" id="GO:0006782">
    <property type="term" value="P:protoporphyrinogen IX biosynthetic process"/>
    <property type="evidence" value="ECO:0007669"/>
    <property type="project" value="UniProtKB-UniRule"/>
</dbReference>
<dbReference type="FunFam" id="3.40.1500.10:FF:000001">
    <property type="entry name" value="Oxygen-dependent coproporphyrinogen-III oxidase"/>
    <property type="match status" value="1"/>
</dbReference>
<dbReference type="Gene3D" id="3.40.1500.10">
    <property type="entry name" value="Coproporphyrinogen III oxidase, aerobic"/>
    <property type="match status" value="1"/>
</dbReference>
<dbReference type="HAMAP" id="MF_00333">
    <property type="entry name" value="Coprogen_oxidas"/>
    <property type="match status" value="1"/>
</dbReference>
<dbReference type="InterPro" id="IPR001260">
    <property type="entry name" value="Coprogen_oxidase_aer"/>
</dbReference>
<dbReference type="InterPro" id="IPR036406">
    <property type="entry name" value="Coprogen_oxidase_aer_sf"/>
</dbReference>
<dbReference type="InterPro" id="IPR018375">
    <property type="entry name" value="Coprogen_oxidase_CS"/>
</dbReference>
<dbReference type="NCBIfam" id="NF003727">
    <property type="entry name" value="PRK05330.1"/>
    <property type="match status" value="1"/>
</dbReference>
<dbReference type="PANTHER" id="PTHR10755">
    <property type="entry name" value="COPROPORPHYRINOGEN III OXIDASE, MITOCHONDRIAL"/>
    <property type="match status" value="1"/>
</dbReference>
<dbReference type="PANTHER" id="PTHR10755:SF0">
    <property type="entry name" value="OXYGEN-DEPENDENT COPROPORPHYRINOGEN-III OXIDASE, MITOCHONDRIAL"/>
    <property type="match status" value="1"/>
</dbReference>
<dbReference type="Pfam" id="PF01218">
    <property type="entry name" value="Coprogen_oxidas"/>
    <property type="match status" value="1"/>
</dbReference>
<dbReference type="PIRSF" id="PIRSF000166">
    <property type="entry name" value="Coproporphyri_ox"/>
    <property type="match status" value="1"/>
</dbReference>
<dbReference type="PRINTS" id="PR00073">
    <property type="entry name" value="COPRGNOXDASE"/>
</dbReference>
<dbReference type="SUPFAM" id="SSF102886">
    <property type="entry name" value="Coproporphyrinogen III oxidase"/>
    <property type="match status" value="1"/>
</dbReference>
<dbReference type="PROSITE" id="PS01021">
    <property type="entry name" value="COPROGEN_OXIDASE"/>
    <property type="match status" value="1"/>
</dbReference>
<sequence>MSKPDVAQVKAFLLQLQDEICRSLEQADGVGRFVEDAWAREGGGGGRTRVMRHGDMIEQGGVNFSHVYGDAMPASATAHRPELAGRKFEAMGVSLVIHPHNPYVPTSHANVRFFIAEKEGEEPIWWFGGGFDLTPFYPFAEDVQHWHRVSRDLCQPFGEDIYPEFKSWCDRYFFLKHRNETRGVGGLFFDDLNRWPFADCFAFMQAVGRGYLDAYLPIIERRKAQPYGEREREFQLYRRGRYVEFNLVYDRGTLFGLQTGGRTESILMSMPPLARWEYDWQPEAGSPEALLYTDYLAPREWL</sequence>
<accession>A4ST50</accession>
<protein>
    <recommendedName>
        <fullName evidence="1">Oxygen-dependent coproporphyrinogen-III oxidase</fullName>
        <shortName evidence="1">CPO</shortName>
        <shortName evidence="1">Coprogen oxidase</shortName>
        <shortName evidence="1">Coproporphyrinogenase</shortName>
        <ecNumber evidence="1">1.3.3.3</ecNumber>
    </recommendedName>
</protein>
<comment type="function">
    <text evidence="1">Involved in the heme biosynthesis. Catalyzes the aerobic oxidative decarboxylation of propionate groups of rings A and B of coproporphyrinogen-III to yield the vinyl groups in protoporphyrinogen-IX.</text>
</comment>
<comment type="catalytic activity">
    <reaction evidence="1">
        <text>coproporphyrinogen III + O2 + 2 H(+) = protoporphyrinogen IX + 2 CO2 + 2 H2O</text>
        <dbReference type="Rhea" id="RHEA:18257"/>
        <dbReference type="ChEBI" id="CHEBI:15377"/>
        <dbReference type="ChEBI" id="CHEBI:15378"/>
        <dbReference type="ChEBI" id="CHEBI:15379"/>
        <dbReference type="ChEBI" id="CHEBI:16526"/>
        <dbReference type="ChEBI" id="CHEBI:57307"/>
        <dbReference type="ChEBI" id="CHEBI:57309"/>
        <dbReference type="EC" id="1.3.3.3"/>
    </reaction>
</comment>
<comment type="cofactor">
    <cofactor evidence="1">
        <name>a divalent metal cation</name>
        <dbReference type="ChEBI" id="CHEBI:60240"/>
    </cofactor>
</comment>
<comment type="pathway">
    <text evidence="1">Porphyrin-containing compound metabolism; protoporphyrin-IX biosynthesis; protoporphyrinogen-IX from coproporphyrinogen-III (O2 route): step 1/1.</text>
</comment>
<comment type="subunit">
    <text evidence="1">Homodimer.</text>
</comment>
<comment type="subcellular location">
    <subcellularLocation>
        <location evidence="1">Cytoplasm</location>
    </subcellularLocation>
</comment>
<comment type="similarity">
    <text evidence="1">Belongs to the aerobic coproporphyrinogen-III oxidase family.</text>
</comment>
<feature type="chain" id="PRO_1000019456" description="Oxygen-dependent coproporphyrinogen-III oxidase">
    <location>
        <begin position="1"/>
        <end position="302"/>
    </location>
</feature>
<feature type="region of interest" description="Important for dimerization" evidence="1">
    <location>
        <begin position="242"/>
        <end position="277"/>
    </location>
</feature>
<feature type="active site" description="Proton donor" evidence="1">
    <location>
        <position position="108"/>
    </location>
</feature>
<feature type="binding site" evidence="1">
    <location>
        <position position="94"/>
    </location>
    <ligand>
        <name>substrate</name>
    </ligand>
</feature>
<feature type="binding site" evidence="1">
    <location>
        <position position="98"/>
    </location>
    <ligand>
        <name>a divalent metal cation</name>
        <dbReference type="ChEBI" id="CHEBI:60240"/>
    </ligand>
</feature>
<feature type="binding site" evidence="1">
    <location>
        <position position="108"/>
    </location>
    <ligand>
        <name>a divalent metal cation</name>
        <dbReference type="ChEBI" id="CHEBI:60240"/>
    </ligand>
</feature>
<feature type="binding site" evidence="1">
    <location>
        <begin position="110"/>
        <end position="112"/>
    </location>
    <ligand>
        <name>substrate</name>
    </ligand>
</feature>
<feature type="binding site" evidence="1">
    <location>
        <position position="147"/>
    </location>
    <ligand>
        <name>a divalent metal cation</name>
        <dbReference type="ChEBI" id="CHEBI:60240"/>
    </ligand>
</feature>
<feature type="binding site" evidence="1">
    <location>
        <position position="177"/>
    </location>
    <ligand>
        <name>a divalent metal cation</name>
        <dbReference type="ChEBI" id="CHEBI:60240"/>
    </ligand>
</feature>
<feature type="binding site" evidence="1">
    <location>
        <begin position="260"/>
        <end position="262"/>
    </location>
    <ligand>
        <name>substrate</name>
    </ligand>
</feature>
<feature type="site" description="Important for dimerization" evidence="1">
    <location>
        <position position="177"/>
    </location>
</feature>
<keyword id="KW-0963">Cytoplasm</keyword>
<keyword id="KW-0350">Heme biosynthesis</keyword>
<keyword id="KW-0479">Metal-binding</keyword>
<keyword id="KW-0560">Oxidoreductase</keyword>
<keyword id="KW-0627">Porphyrin biosynthesis</keyword>
<gene>
    <name evidence="1" type="primary">hemF</name>
    <name type="ordered locus">ASA_4133</name>
</gene>
<name>HEM6_AERS4</name>
<proteinExistence type="inferred from homology"/>
<organism>
    <name type="scientific">Aeromonas salmonicida (strain A449)</name>
    <dbReference type="NCBI Taxonomy" id="382245"/>
    <lineage>
        <taxon>Bacteria</taxon>
        <taxon>Pseudomonadati</taxon>
        <taxon>Pseudomonadota</taxon>
        <taxon>Gammaproteobacteria</taxon>
        <taxon>Aeromonadales</taxon>
        <taxon>Aeromonadaceae</taxon>
        <taxon>Aeromonas</taxon>
    </lineage>
</organism>
<reference key="1">
    <citation type="journal article" date="2008" name="BMC Genomics">
        <title>The genome of Aeromonas salmonicida subsp. salmonicida A449: insights into the evolution of a fish pathogen.</title>
        <authorList>
            <person name="Reith M.E."/>
            <person name="Singh R.K."/>
            <person name="Curtis B."/>
            <person name="Boyd J.M."/>
            <person name="Bouevitch A."/>
            <person name="Kimball J."/>
            <person name="Munholland J."/>
            <person name="Murphy C."/>
            <person name="Sarty D."/>
            <person name="Williams J."/>
            <person name="Nash J.H."/>
            <person name="Johnson S.C."/>
            <person name="Brown L.L."/>
        </authorList>
    </citation>
    <scope>NUCLEOTIDE SEQUENCE [LARGE SCALE GENOMIC DNA]</scope>
    <source>
        <strain>A449</strain>
    </source>
</reference>
<evidence type="ECO:0000255" key="1">
    <source>
        <dbReference type="HAMAP-Rule" id="MF_00333"/>
    </source>
</evidence>